<accession>P31351</accession>
<reference key="1">
    <citation type="journal article" date="1990" name="Int. J. Biochem.">
        <title>Characterization of a new inhibitor for angiotensin converting enzyme from the venom of Vipera aspis aspis.</title>
        <authorList>
            <person name="Komori Y."/>
            <person name="Sugihara H."/>
        </authorList>
    </citation>
    <scope>PROTEIN SEQUENCE</scope>
    <scope>PYROGLUTAMATE FORMATION AT GLN-1</scope>
    <source>
        <tissue>Venom</tissue>
    </source>
</reference>
<feature type="peptide" id="PRO_0000043515" description="Bradykinin-potentiating peptide">
    <location>
        <begin position="1"/>
        <end position="10"/>
    </location>
</feature>
<feature type="modified residue" description="Pyrrolidone carboxylic acid" evidence="1">
    <location>
        <position position="1"/>
    </location>
</feature>
<comment type="function">
    <text>This peptide both inhibits the activity of the angiotensin-converting enzyme (ACE) and enhances the action of bradykinin by inhibiting the peptidases that inactivate it. It acts as an indirect hypotensive agent.</text>
</comment>
<comment type="subcellular location">
    <subcellularLocation>
        <location>Secreted</location>
    </subcellularLocation>
</comment>
<comment type="tissue specificity">
    <text>Expressed by the venom gland.</text>
</comment>
<comment type="similarity">
    <text evidence="2">Belongs to the bradykinin-potentiating peptide family.</text>
</comment>
<sequence length="10" mass="1062">QGWPGPKVPP</sequence>
<keyword id="KW-0903">Direct protein sequencing</keyword>
<keyword id="KW-0382">Hypotensive agent</keyword>
<keyword id="KW-0481">Metalloenzyme inhibitor</keyword>
<keyword id="KW-0483">Metalloprotease inhibitor</keyword>
<keyword id="KW-0646">Protease inhibitor</keyword>
<keyword id="KW-0873">Pyrrolidone carboxylic acid</keyword>
<keyword id="KW-0964">Secreted</keyword>
<keyword id="KW-0800">Toxin</keyword>
<evidence type="ECO:0000269" key="1">
    <source>
    </source>
</evidence>
<evidence type="ECO:0000305" key="2"/>
<name>BPP_VIPAS</name>
<dbReference type="PIR" id="A60377">
    <property type="entry name" value="XASNPC"/>
</dbReference>
<dbReference type="GO" id="GO:0005576">
    <property type="term" value="C:extracellular region"/>
    <property type="evidence" value="ECO:0007669"/>
    <property type="project" value="UniProtKB-SubCell"/>
</dbReference>
<dbReference type="GO" id="GO:0030414">
    <property type="term" value="F:peptidase inhibitor activity"/>
    <property type="evidence" value="ECO:0007669"/>
    <property type="project" value="UniProtKB-KW"/>
</dbReference>
<dbReference type="GO" id="GO:0090729">
    <property type="term" value="F:toxin activity"/>
    <property type="evidence" value="ECO:0007669"/>
    <property type="project" value="UniProtKB-KW"/>
</dbReference>
<dbReference type="GO" id="GO:0008217">
    <property type="term" value="P:regulation of blood pressure"/>
    <property type="evidence" value="ECO:0007669"/>
    <property type="project" value="UniProtKB-KW"/>
</dbReference>
<protein>
    <recommendedName>
        <fullName>Bradykinin-potentiating peptide</fullName>
        <shortName>BPP</shortName>
    </recommendedName>
    <alternativeName>
        <fullName>Angiotensin-converting enzyme inhibitor</fullName>
    </alternativeName>
</protein>
<proteinExistence type="evidence at protein level"/>
<organism>
    <name type="scientific">Vipera aspis</name>
    <name type="common">Aspic viper</name>
    <dbReference type="NCBI Taxonomy" id="8706"/>
    <lineage>
        <taxon>Eukaryota</taxon>
        <taxon>Metazoa</taxon>
        <taxon>Chordata</taxon>
        <taxon>Craniata</taxon>
        <taxon>Vertebrata</taxon>
        <taxon>Euteleostomi</taxon>
        <taxon>Lepidosauria</taxon>
        <taxon>Squamata</taxon>
        <taxon>Bifurcata</taxon>
        <taxon>Unidentata</taxon>
        <taxon>Episquamata</taxon>
        <taxon>Toxicofera</taxon>
        <taxon>Serpentes</taxon>
        <taxon>Colubroidea</taxon>
        <taxon>Viperidae</taxon>
        <taxon>Viperinae</taxon>
        <taxon>Vipera</taxon>
    </lineage>
</organism>